<proteinExistence type="evidence at protein level"/>
<name>CAD26_HUMAN</name>
<organism>
    <name type="scientific">Homo sapiens</name>
    <name type="common">Human</name>
    <dbReference type="NCBI Taxonomy" id="9606"/>
    <lineage>
        <taxon>Eukaryota</taxon>
        <taxon>Metazoa</taxon>
        <taxon>Chordata</taxon>
        <taxon>Craniata</taxon>
        <taxon>Vertebrata</taxon>
        <taxon>Euteleostomi</taxon>
        <taxon>Mammalia</taxon>
        <taxon>Eutheria</taxon>
        <taxon>Euarchontoglires</taxon>
        <taxon>Primates</taxon>
        <taxon>Haplorrhini</taxon>
        <taxon>Catarrhini</taxon>
        <taxon>Hominidae</taxon>
        <taxon>Homo</taxon>
    </lineage>
</organism>
<comment type="function">
    <text evidence="5">Cadherins are calcium-dependent cell adhesion proteins. They preferentially interact with themselves in a homophilic manner in connecting cells; cadherins may thus contribute to the sorting of heterogeneous cell types. Ligand for integrins alpha-E/beta-7, ITGAE:ITGAB7, alpha-4/beta-7, ITGA4:ITGAB7 and alpha-4/beta-1, ITGA4:ITGAB1 through which modulates CD4(+) T cells activation (PubMed:28051089).</text>
</comment>
<comment type="subunit">
    <text evidence="5">Homodimer (PubMed:28051089). Component of a cadherin:catenin adhesion complex composed of at least of CDH26, beta-catenin/CTNNB1, alpha-catenin/CTNNA1 and p120 catenin/CTNND1 (PubMed:28051089).</text>
</comment>
<comment type="subcellular location">
    <subcellularLocation>
        <location evidence="5">Cell membrane</location>
        <topology evidence="8">Single-pass type I membrane protein</topology>
    </subcellularLocation>
</comment>
<comment type="alternative products">
    <event type="alternative splicing"/>
    <isoform>
        <id>Q8IXH8-4</id>
        <name>3</name>
        <sequence type="displayed"/>
    </isoform>
    <isoform>
        <id>Q8IXH8-1</id>
        <name>1</name>
        <name>a</name>
        <sequence type="described" ref="VSP_059693"/>
    </isoform>
    <isoform>
        <id>Q8IXH8-2</id>
        <name>2</name>
        <name>b</name>
        <sequence type="described" ref="VSP_008333 VSP_008334"/>
    </isoform>
    <isoform>
        <id>Q8IXH8-5</id>
        <name>4</name>
        <sequence type="described" ref="VSP_008333 VSP_008334 VSP_059694"/>
    </isoform>
</comment>
<comment type="tissue specificity">
    <text evidence="5">Expressed by epithelial cells of gastrointestinal tissue.</text>
</comment>
<comment type="domain">
    <text evidence="1">Three calcium ions are usually bound at the interface of each cadherin domain and rigidify the connections, imparting a strong curvature to the full-length ectodomain.</text>
</comment>
<comment type="PTM">
    <text evidence="5">N-glycosylated.</text>
</comment>
<accession>Q8IXH8</accession>
<accession>A2A2M5</accession>
<accession>B3KNX3</accession>
<accession>Q6P5Y6</accession>
<accession>Q8TCH3</accession>
<accession>Q9BQN4</accession>
<accession>Q9NRU1</accession>
<feature type="signal peptide" evidence="2">
    <location>
        <begin position="1"/>
        <end position="27"/>
    </location>
</feature>
<feature type="chain" id="PRO_0000003829" description="Cadherin-like protein 26" evidence="2">
    <location>
        <begin position="28"/>
        <end position="832"/>
    </location>
</feature>
<feature type="topological domain" description="Extracellular" evidence="2">
    <location>
        <begin position="28"/>
        <end position="614"/>
    </location>
</feature>
<feature type="transmembrane region" description="Helical" evidence="2">
    <location>
        <begin position="615"/>
        <end position="635"/>
    </location>
</feature>
<feature type="topological domain" description="Cytoplasmic" evidence="2">
    <location>
        <begin position="636"/>
        <end position="832"/>
    </location>
</feature>
<feature type="domain" description="Cadherin 1" evidence="3">
    <location>
        <begin position="35"/>
        <end position="165"/>
    </location>
</feature>
<feature type="domain" description="Cadherin 2" evidence="3">
    <location>
        <begin position="166"/>
        <end position="275"/>
    </location>
</feature>
<feature type="domain" description="Cadherin 3" evidence="3">
    <location>
        <begin position="276"/>
        <end position="396"/>
    </location>
</feature>
<feature type="domain" description="Cadherin 4" evidence="3">
    <location>
        <begin position="397"/>
        <end position="500"/>
    </location>
</feature>
<feature type="region of interest" description="Disordered" evidence="4">
    <location>
        <begin position="813"/>
        <end position="832"/>
    </location>
</feature>
<feature type="glycosylation site" description="N-linked (GlcNAc...) asparagine" evidence="2">
    <location>
        <position position="81"/>
    </location>
</feature>
<feature type="glycosylation site" description="N-linked (GlcNAc...) asparagine" evidence="2">
    <location>
        <position position="85"/>
    </location>
</feature>
<feature type="glycosylation site" description="N-linked (GlcNAc...) asparagine" evidence="2">
    <location>
        <position position="171"/>
    </location>
</feature>
<feature type="glycosylation site" description="N-linked (GlcNAc...) asparagine" evidence="2">
    <location>
        <position position="177"/>
    </location>
</feature>
<feature type="glycosylation site" description="N-linked (GlcNAc...) asparagine" evidence="2">
    <location>
        <position position="462"/>
    </location>
</feature>
<feature type="splice variant" id="VSP_008333" description="In isoform 2 and isoform 4." evidence="6 7">
    <location>
        <begin position="1"/>
        <end position="667"/>
    </location>
</feature>
<feature type="splice variant" id="VSP_008334" description="In isoform 2 and isoform 4." evidence="6 7">
    <original>KGTSAQ</original>
    <variation>MKPLIW</variation>
    <location>
        <begin position="668"/>
        <end position="673"/>
    </location>
</feature>
<feature type="splice variant" id="VSP_059693" description="In isoform 1.">
    <original>DLEEVPPSAASQSAQARCALGSWGYGKPFEPRSVKNIHSTPAYPDATMHRQLLAPVEGRMAETLNQKLHVANVLEDDPGYLPHVYSEEGECGGAPSLSSLASLEQELQPDLLDSLGSKATPFEEIYSESGVPS</original>
    <variation>AYPDATMHRQLLAPVEGRMAETLNQSKERNRFSLSRGCIIPQGRATAGRGLPQDIYKEMMPRRLTQTGKRKHGALARTPSFKKVVYDHKEDEENKAGRKQRSHLFKVMQLRNEQGGVRVQSAHSPSPLNKKACFPGDYRGESAGGHNCRAVSG</variation>
    <location>
        <begin position="700"/>
        <end position="832"/>
    </location>
</feature>
<feature type="splice variant" id="VSP_059694" description="In isoform 4.">
    <location>
        <begin position="700"/>
        <end position="740"/>
    </location>
</feature>
<feature type="sequence variant" id="VAR_055568" description="In dbSNP:rs6015609.">
    <original>I</original>
    <variation>T</variation>
    <location>
        <position position="144"/>
    </location>
</feature>
<feature type="sequence variant" id="VAR_055569" description="In dbSNP:rs11086690.">
    <original>R</original>
    <variation>G</variation>
    <location>
        <position position="301"/>
    </location>
</feature>
<feature type="sequence variant" id="VAR_055570" description="In dbSNP:rs34866303.">
    <original>V</original>
    <variation>A</variation>
    <location>
        <position position="448"/>
    </location>
</feature>
<feature type="sequence variant" id="VAR_055571" description="In dbSNP:rs6071067.">
    <original>P</original>
    <variation>L</variation>
    <location>
        <position position="479"/>
    </location>
</feature>
<feature type="sequence variant" id="VAR_055572" description="In dbSNP:rs194998.">
    <original>V</original>
    <variation>L</variation>
    <location>
        <position position="615"/>
    </location>
</feature>
<keyword id="KW-0025">Alternative splicing</keyword>
<keyword id="KW-0106">Calcium</keyword>
<keyword id="KW-0130">Cell adhesion</keyword>
<keyword id="KW-1003">Cell membrane</keyword>
<keyword id="KW-0325">Glycoprotein</keyword>
<keyword id="KW-0472">Membrane</keyword>
<keyword id="KW-0479">Metal-binding</keyword>
<keyword id="KW-1267">Proteomics identification</keyword>
<keyword id="KW-1185">Reference proteome</keyword>
<keyword id="KW-0677">Repeat</keyword>
<keyword id="KW-0732">Signal</keyword>
<keyword id="KW-0812">Transmembrane</keyword>
<keyword id="KW-1133">Transmembrane helix</keyword>
<gene>
    <name type="primary">CDH26</name>
</gene>
<dbReference type="EMBL" id="AK055202">
    <property type="protein sequence ID" value="BAG51485.1"/>
    <property type="molecule type" value="mRNA"/>
</dbReference>
<dbReference type="EMBL" id="AK074477">
    <property type="protein sequence ID" value="BAB85093.1"/>
    <property type="molecule type" value="mRNA"/>
</dbReference>
<dbReference type="EMBL" id="AL109928">
    <property type="status" value="NOT_ANNOTATED_CDS"/>
    <property type="molecule type" value="Genomic_DNA"/>
</dbReference>
<dbReference type="EMBL" id="CH471077">
    <property type="protein sequence ID" value="EAW75420.1"/>
    <property type="molecule type" value="Genomic_DNA"/>
</dbReference>
<dbReference type="EMBL" id="CH471077">
    <property type="protein sequence ID" value="EAW75421.1"/>
    <property type="molecule type" value="Genomic_DNA"/>
</dbReference>
<dbReference type="EMBL" id="BC062570">
    <property type="protein sequence ID" value="AAH62570.1"/>
    <property type="molecule type" value="mRNA"/>
</dbReference>
<dbReference type="EMBL" id="AF169690">
    <property type="protein sequence ID" value="AAF89687.1"/>
    <property type="molecule type" value="mRNA"/>
</dbReference>
<dbReference type="CCDS" id="CCDS13485.1">
    <molecule id="Q8IXH8-4"/>
</dbReference>
<dbReference type="CCDS" id="CCDS13486.1">
    <molecule id="Q8IXH8-2"/>
</dbReference>
<dbReference type="CCDS" id="CCDS86964.1">
    <molecule id="Q8IXH8-5"/>
</dbReference>
<dbReference type="RefSeq" id="NP_001335133.1">
    <molecule id="Q8IXH8-5"/>
    <property type="nucleotide sequence ID" value="NM_001348204.2"/>
</dbReference>
<dbReference type="RefSeq" id="NP_068582.2">
    <molecule id="Q8IXH8-2"/>
    <property type="nucleotide sequence ID" value="NM_021810.5"/>
</dbReference>
<dbReference type="RefSeq" id="NP_817089.1">
    <molecule id="Q8IXH8-4"/>
    <property type="nucleotide sequence ID" value="NM_177980.4"/>
</dbReference>
<dbReference type="SMR" id="Q8IXH8"/>
<dbReference type="BioGRID" id="121909">
    <property type="interactions" value="5"/>
</dbReference>
<dbReference type="FunCoup" id="Q8IXH8">
    <property type="interactions" value="25"/>
</dbReference>
<dbReference type="IntAct" id="Q8IXH8">
    <property type="interactions" value="1"/>
</dbReference>
<dbReference type="STRING" id="9606.ENSP00000339390"/>
<dbReference type="CarbonylDB" id="Q8IXH8"/>
<dbReference type="GlyCosmos" id="Q8IXH8">
    <property type="glycosylation" value="5 sites, No reported glycans"/>
</dbReference>
<dbReference type="GlyGen" id="Q8IXH8">
    <property type="glycosylation" value="6 sites"/>
</dbReference>
<dbReference type="iPTMnet" id="Q8IXH8"/>
<dbReference type="PhosphoSitePlus" id="Q8IXH8"/>
<dbReference type="BioMuta" id="CDH26"/>
<dbReference type="DMDM" id="152031568"/>
<dbReference type="MassIVE" id="Q8IXH8"/>
<dbReference type="PaxDb" id="9606-ENSP00000339390"/>
<dbReference type="PeptideAtlas" id="Q8IXH8"/>
<dbReference type="Antibodypedia" id="2400">
    <property type="antibodies" value="147 antibodies from 24 providers"/>
</dbReference>
<dbReference type="DNASU" id="60437"/>
<dbReference type="Ensembl" id="ENST00000244049.7">
    <molecule id="Q8IXH8-5"/>
    <property type="protein sequence ID" value="ENSP00000244049.3"/>
    <property type="gene ID" value="ENSG00000124215.17"/>
</dbReference>
<dbReference type="Ensembl" id="ENST00000348616.9">
    <molecule id="Q8IXH8-4"/>
    <property type="protein sequence ID" value="ENSP00000339390.4"/>
    <property type="gene ID" value="ENSG00000124215.17"/>
</dbReference>
<dbReference type="Ensembl" id="ENST00000350849.10">
    <molecule id="Q8IXH8-2"/>
    <property type="protein sequence ID" value="ENSP00000310845.7"/>
    <property type="gene ID" value="ENSG00000124215.17"/>
</dbReference>
<dbReference type="GeneID" id="60437"/>
<dbReference type="KEGG" id="hsa:60437"/>
<dbReference type="MANE-Select" id="ENST00000348616.9">
    <property type="protein sequence ID" value="ENSP00000339390.4"/>
    <property type="RefSeq nucleotide sequence ID" value="NM_177980.4"/>
    <property type="RefSeq protein sequence ID" value="NP_817089.1"/>
</dbReference>
<dbReference type="UCSC" id="uc002ybe.4">
    <molecule id="Q8IXH8-4"/>
    <property type="organism name" value="human"/>
</dbReference>
<dbReference type="AGR" id="HGNC:15902"/>
<dbReference type="CTD" id="60437"/>
<dbReference type="DisGeNET" id="60437"/>
<dbReference type="GeneCards" id="CDH26"/>
<dbReference type="HGNC" id="HGNC:15902">
    <property type="gene designation" value="CDH26"/>
</dbReference>
<dbReference type="HPA" id="ENSG00000124215">
    <property type="expression patterns" value="Tissue enhanced (prostate)"/>
</dbReference>
<dbReference type="MIM" id="617685">
    <property type="type" value="gene"/>
</dbReference>
<dbReference type="neXtProt" id="NX_Q8IXH8"/>
<dbReference type="OpenTargets" id="ENSG00000124215"/>
<dbReference type="PharmGKB" id="PA26298"/>
<dbReference type="VEuPathDB" id="HostDB:ENSG00000124215"/>
<dbReference type="eggNOG" id="KOG3594">
    <property type="taxonomic scope" value="Eukaryota"/>
</dbReference>
<dbReference type="GeneTree" id="ENSGT00940000161589"/>
<dbReference type="HOGENOM" id="CLU_005284_5_0_1"/>
<dbReference type="InParanoid" id="Q8IXH8"/>
<dbReference type="OMA" id="MRSGSHP"/>
<dbReference type="OrthoDB" id="9045962at2759"/>
<dbReference type="PAN-GO" id="Q8IXH8">
    <property type="GO annotations" value="4 GO annotations based on evolutionary models"/>
</dbReference>
<dbReference type="PhylomeDB" id="Q8IXH8"/>
<dbReference type="TreeFam" id="TF316817"/>
<dbReference type="PathwayCommons" id="Q8IXH8"/>
<dbReference type="BioGRID-ORCS" id="60437">
    <property type="hits" value="15 hits in 1146 CRISPR screens"/>
</dbReference>
<dbReference type="GenomeRNAi" id="60437"/>
<dbReference type="Pharos" id="Q8IXH8">
    <property type="development level" value="Tbio"/>
</dbReference>
<dbReference type="PRO" id="PR:Q8IXH8"/>
<dbReference type="Proteomes" id="UP000005640">
    <property type="component" value="Chromosome 20"/>
</dbReference>
<dbReference type="RNAct" id="Q8IXH8">
    <property type="molecule type" value="protein"/>
</dbReference>
<dbReference type="Bgee" id="ENSG00000124215">
    <property type="expression patterns" value="Expressed in bronchial epithelial cell and 119 other cell types or tissues"/>
</dbReference>
<dbReference type="ExpressionAtlas" id="Q8IXH8">
    <property type="expression patterns" value="baseline and differential"/>
</dbReference>
<dbReference type="GO" id="GO:0005912">
    <property type="term" value="C:adherens junction"/>
    <property type="evidence" value="ECO:0000318"/>
    <property type="project" value="GO_Central"/>
</dbReference>
<dbReference type="GO" id="GO:0016342">
    <property type="term" value="C:catenin complex"/>
    <property type="evidence" value="ECO:0000318"/>
    <property type="project" value="GO_Central"/>
</dbReference>
<dbReference type="GO" id="GO:0015630">
    <property type="term" value="C:microtubule cytoskeleton"/>
    <property type="evidence" value="ECO:0000314"/>
    <property type="project" value="HPA"/>
</dbReference>
<dbReference type="GO" id="GO:0005886">
    <property type="term" value="C:plasma membrane"/>
    <property type="evidence" value="ECO:0000314"/>
    <property type="project" value="HPA"/>
</dbReference>
<dbReference type="GO" id="GO:0045294">
    <property type="term" value="F:alpha-catenin binding"/>
    <property type="evidence" value="ECO:0000314"/>
    <property type="project" value="UniProtKB"/>
</dbReference>
<dbReference type="GO" id="GO:0008013">
    <property type="term" value="F:beta-catenin binding"/>
    <property type="evidence" value="ECO:0000314"/>
    <property type="project" value="UniProtKB"/>
</dbReference>
<dbReference type="GO" id="GO:0045296">
    <property type="term" value="F:cadherin binding"/>
    <property type="evidence" value="ECO:0000318"/>
    <property type="project" value="GO_Central"/>
</dbReference>
<dbReference type="GO" id="GO:0005509">
    <property type="term" value="F:calcium ion binding"/>
    <property type="evidence" value="ECO:0007669"/>
    <property type="project" value="InterPro"/>
</dbReference>
<dbReference type="GO" id="GO:0070097">
    <property type="term" value="F:delta-catenin binding"/>
    <property type="evidence" value="ECO:0000314"/>
    <property type="project" value="UniProtKB"/>
</dbReference>
<dbReference type="GO" id="GO:0005178">
    <property type="term" value="F:integrin binding"/>
    <property type="evidence" value="ECO:0000314"/>
    <property type="project" value="UniProtKB"/>
</dbReference>
<dbReference type="GO" id="GO:0034332">
    <property type="term" value="P:adherens junction organization"/>
    <property type="evidence" value="ECO:0000318"/>
    <property type="project" value="GO_Central"/>
</dbReference>
<dbReference type="GO" id="GO:0016339">
    <property type="term" value="P:calcium-dependent cell-cell adhesion via plasma membrane cell adhesion molecules"/>
    <property type="evidence" value="ECO:0000318"/>
    <property type="project" value="GO_Central"/>
</dbReference>
<dbReference type="GO" id="GO:0035710">
    <property type="term" value="P:CD4-positive, alpha-beta T cell activation"/>
    <property type="evidence" value="ECO:0000314"/>
    <property type="project" value="UniProtKB"/>
</dbReference>
<dbReference type="GO" id="GO:0016477">
    <property type="term" value="P:cell migration"/>
    <property type="evidence" value="ECO:0000318"/>
    <property type="project" value="GO_Central"/>
</dbReference>
<dbReference type="GO" id="GO:0000902">
    <property type="term" value="P:cell morphogenesis"/>
    <property type="evidence" value="ECO:0000318"/>
    <property type="project" value="GO_Central"/>
</dbReference>
<dbReference type="GO" id="GO:0044331">
    <property type="term" value="P:cell-cell adhesion mediated by cadherin"/>
    <property type="evidence" value="ECO:0000318"/>
    <property type="project" value="GO_Central"/>
</dbReference>
<dbReference type="GO" id="GO:0007043">
    <property type="term" value="P:cell-cell junction assembly"/>
    <property type="evidence" value="ECO:0000318"/>
    <property type="project" value="GO_Central"/>
</dbReference>
<dbReference type="GO" id="GO:0007156">
    <property type="term" value="P:homophilic cell adhesion via plasma membrane adhesion molecules"/>
    <property type="evidence" value="ECO:0007669"/>
    <property type="project" value="InterPro"/>
</dbReference>
<dbReference type="CDD" id="cd11304">
    <property type="entry name" value="Cadherin_repeat"/>
    <property type="match status" value="4"/>
</dbReference>
<dbReference type="FunFam" id="2.60.40.60:FF:000095">
    <property type="entry name" value="Cadherin 13"/>
    <property type="match status" value="1"/>
</dbReference>
<dbReference type="FunFam" id="2.60.40.60:FF:000019">
    <property type="entry name" value="Cadherin 2"/>
    <property type="match status" value="1"/>
</dbReference>
<dbReference type="FunFam" id="2.60.40.60:FF:000031">
    <property type="entry name" value="Cadherin 3"/>
    <property type="match status" value="1"/>
</dbReference>
<dbReference type="FunFam" id="2.60.40.60:FF:000202">
    <property type="entry name" value="cadherin-8 isoform X4"/>
    <property type="match status" value="1"/>
</dbReference>
<dbReference type="FunFam" id="2.60.40.60:FF:000158">
    <property type="entry name" value="Dachsous cadherin-related 1"/>
    <property type="match status" value="1"/>
</dbReference>
<dbReference type="Gene3D" id="2.60.40.60">
    <property type="entry name" value="Cadherins"/>
    <property type="match status" value="5"/>
</dbReference>
<dbReference type="InterPro" id="IPR039808">
    <property type="entry name" value="Cadherin"/>
</dbReference>
<dbReference type="InterPro" id="IPR002126">
    <property type="entry name" value="Cadherin-like_dom"/>
</dbReference>
<dbReference type="InterPro" id="IPR015919">
    <property type="entry name" value="Cadherin-like_sf"/>
</dbReference>
<dbReference type="InterPro" id="IPR020894">
    <property type="entry name" value="Cadherin_CS"/>
</dbReference>
<dbReference type="PANTHER" id="PTHR24027">
    <property type="entry name" value="CADHERIN-23"/>
    <property type="match status" value="1"/>
</dbReference>
<dbReference type="PANTHER" id="PTHR24027:SF78">
    <property type="entry name" value="CADHERIN-LIKE PROTEIN 26"/>
    <property type="match status" value="1"/>
</dbReference>
<dbReference type="Pfam" id="PF00028">
    <property type="entry name" value="Cadherin"/>
    <property type="match status" value="3"/>
</dbReference>
<dbReference type="PRINTS" id="PR00205">
    <property type="entry name" value="CADHERIN"/>
</dbReference>
<dbReference type="SMART" id="SM00112">
    <property type="entry name" value="CA"/>
    <property type="match status" value="4"/>
</dbReference>
<dbReference type="SUPFAM" id="SSF49313">
    <property type="entry name" value="Cadherin-like"/>
    <property type="match status" value="5"/>
</dbReference>
<dbReference type="PROSITE" id="PS00232">
    <property type="entry name" value="CADHERIN_1"/>
    <property type="match status" value="2"/>
</dbReference>
<dbReference type="PROSITE" id="PS50268">
    <property type="entry name" value="CADHERIN_2"/>
    <property type="match status" value="4"/>
</dbReference>
<evidence type="ECO:0000250" key="1"/>
<evidence type="ECO:0000255" key="2"/>
<evidence type="ECO:0000255" key="3">
    <source>
        <dbReference type="PROSITE-ProRule" id="PRU00043"/>
    </source>
</evidence>
<evidence type="ECO:0000256" key="4">
    <source>
        <dbReference type="SAM" id="MobiDB-lite"/>
    </source>
</evidence>
<evidence type="ECO:0000269" key="5">
    <source>
    </source>
</evidence>
<evidence type="ECO:0000303" key="6">
    <source>
    </source>
</evidence>
<evidence type="ECO:0000303" key="7">
    <source>
    </source>
</evidence>
<evidence type="ECO:0000305" key="8">
    <source>
    </source>
</evidence>
<reference key="1">
    <citation type="journal article" date="2004" name="Nat. Genet.">
        <title>Complete sequencing and characterization of 21,243 full-length human cDNAs.</title>
        <authorList>
            <person name="Ota T."/>
            <person name="Suzuki Y."/>
            <person name="Nishikawa T."/>
            <person name="Otsuki T."/>
            <person name="Sugiyama T."/>
            <person name="Irie R."/>
            <person name="Wakamatsu A."/>
            <person name="Hayashi K."/>
            <person name="Sato H."/>
            <person name="Nagai K."/>
            <person name="Kimura K."/>
            <person name="Makita H."/>
            <person name="Sekine M."/>
            <person name="Obayashi M."/>
            <person name="Nishi T."/>
            <person name="Shibahara T."/>
            <person name="Tanaka T."/>
            <person name="Ishii S."/>
            <person name="Yamamoto J."/>
            <person name="Saito K."/>
            <person name="Kawai Y."/>
            <person name="Isono Y."/>
            <person name="Nakamura Y."/>
            <person name="Nagahari K."/>
            <person name="Murakami K."/>
            <person name="Yasuda T."/>
            <person name="Iwayanagi T."/>
            <person name="Wagatsuma M."/>
            <person name="Shiratori A."/>
            <person name="Sudo H."/>
            <person name="Hosoiri T."/>
            <person name="Kaku Y."/>
            <person name="Kodaira H."/>
            <person name="Kondo H."/>
            <person name="Sugawara M."/>
            <person name="Takahashi M."/>
            <person name="Kanda K."/>
            <person name="Yokoi T."/>
            <person name="Furuya T."/>
            <person name="Kikkawa E."/>
            <person name="Omura Y."/>
            <person name="Abe K."/>
            <person name="Kamihara K."/>
            <person name="Katsuta N."/>
            <person name="Sato K."/>
            <person name="Tanikawa M."/>
            <person name="Yamazaki M."/>
            <person name="Ninomiya K."/>
            <person name="Ishibashi T."/>
            <person name="Yamashita H."/>
            <person name="Murakawa K."/>
            <person name="Fujimori K."/>
            <person name="Tanai H."/>
            <person name="Kimata M."/>
            <person name="Watanabe M."/>
            <person name="Hiraoka S."/>
            <person name="Chiba Y."/>
            <person name="Ishida S."/>
            <person name="Ono Y."/>
            <person name="Takiguchi S."/>
            <person name="Watanabe S."/>
            <person name="Yosida M."/>
            <person name="Hotuta T."/>
            <person name="Kusano J."/>
            <person name="Kanehori K."/>
            <person name="Takahashi-Fujii A."/>
            <person name="Hara H."/>
            <person name="Tanase T.-O."/>
            <person name="Nomura Y."/>
            <person name="Togiya S."/>
            <person name="Komai F."/>
            <person name="Hara R."/>
            <person name="Takeuchi K."/>
            <person name="Arita M."/>
            <person name="Imose N."/>
            <person name="Musashino K."/>
            <person name="Yuuki H."/>
            <person name="Oshima A."/>
            <person name="Sasaki N."/>
            <person name="Aotsuka S."/>
            <person name="Yoshikawa Y."/>
            <person name="Matsunawa H."/>
            <person name="Ichihara T."/>
            <person name="Shiohata N."/>
            <person name="Sano S."/>
            <person name="Moriya S."/>
            <person name="Momiyama H."/>
            <person name="Satoh N."/>
            <person name="Takami S."/>
            <person name="Terashima Y."/>
            <person name="Suzuki O."/>
            <person name="Nakagawa S."/>
            <person name="Senoh A."/>
            <person name="Mizoguchi H."/>
            <person name="Goto Y."/>
            <person name="Shimizu F."/>
            <person name="Wakebe H."/>
            <person name="Hishigaki H."/>
            <person name="Watanabe T."/>
            <person name="Sugiyama A."/>
            <person name="Takemoto M."/>
            <person name="Kawakami B."/>
            <person name="Yamazaki M."/>
            <person name="Watanabe K."/>
            <person name="Kumagai A."/>
            <person name="Itakura S."/>
            <person name="Fukuzumi Y."/>
            <person name="Fujimori Y."/>
            <person name="Komiyama M."/>
            <person name="Tashiro H."/>
            <person name="Tanigami A."/>
            <person name="Fujiwara T."/>
            <person name="Ono T."/>
            <person name="Yamada K."/>
            <person name="Fujii Y."/>
            <person name="Ozaki K."/>
            <person name="Hirao M."/>
            <person name="Ohmori Y."/>
            <person name="Kawabata A."/>
            <person name="Hikiji T."/>
            <person name="Kobatake N."/>
            <person name="Inagaki H."/>
            <person name="Ikema Y."/>
            <person name="Okamoto S."/>
            <person name="Okitani R."/>
            <person name="Kawakami T."/>
            <person name="Noguchi S."/>
            <person name="Itoh T."/>
            <person name="Shigeta K."/>
            <person name="Senba T."/>
            <person name="Matsumura K."/>
            <person name="Nakajima Y."/>
            <person name="Mizuno T."/>
            <person name="Morinaga M."/>
            <person name="Sasaki M."/>
            <person name="Togashi T."/>
            <person name="Oyama M."/>
            <person name="Hata H."/>
            <person name="Watanabe M."/>
            <person name="Komatsu T."/>
            <person name="Mizushima-Sugano J."/>
            <person name="Satoh T."/>
            <person name="Shirai Y."/>
            <person name="Takahashi Y."/>
            <person name="Nakagawa K."/>
            <person name="Okumura K."/>
            <person name="Nagase T."/>
            <person name="Nomura N."/>
            <person name="Kikuchi H."/>
            <person name="Masuho Y."/>
            <person name="Yamashita R."/>
            <person name="Nakai K."/>
            <person name="Yada T."/>
            <person name="Nakamura Y."/>
            <person name="Ohara O."/>
            <person name="Isogai T."/>
            <person name="Sugano S."/>
        </authorList>
    </citation>
    <scope>NUCLEOTIDE SEQUENCE [LARGE SCALE MRNA] (ISOFORMS 2 AND 3)</scope>
    <source>
        <tissue>Lung</tissue>
        <tissue>Tonsillar carcinoma</tissue>
    </source>
</reference>
<reference key="2">
    <citation type="journal article" date="2001" name="Nature">
        <title>The DNA sequence and comparative analysis of human chromosome 20.</title>
        <authorList>
            <person name="Deloukas P."/>
            <person name="Matthews L.H."/>
            <person name="Ashurst J.L."/>
            <person name="Burton J."/>
            <person name="Gilbert J.G.R."/>
            <person name="Jones M."/>
            <person name="Stavrides G."/>
            <person name="Almeida J.P."/>
            <person name="Babbage A.K."/>
            <person name="Bagguley C.L."/>
            <person name="Bailey J."/>
            <person name="Barlow K.F."/>
            <person name="Bates K.N."/>
            <person name="Beard L.M."/>
            <person name="Beare D.M."/>
            <person name="Beasley O.P."/>
            <person name="Bird C.P."/>
            <person name="Blakey S.E."/>
            <person name="Bridgeman A.M."/>
            <person name="Brown A.J."/>
            <person name="Buck D."/>
            <person name="Burrill W.D."/>
            <person name="Butler A.P."/>
            <person name="Carder C."/>
            <person name="Carter N.P."/>
            <person name="Chapman J.C."/>
            <person name="Clamp M."/>
            <person name="Clark G."/>
            <person name="Clark L.N."/>
            <person name="Clark S.Y."/>
            <person name="Clee C.M."/>
            <person name="Clegg S."/>
            <person name="Cobley V.E."/>
            <person name="Collier R.E."/>
            <person name="Connor R.E."/>
            <person name="Corby N.R."/>
            <person name="Coulson A."/>
            <person name="Coville G.J."/>
            <person name="Deadman R."/>
            <person name="Dhami P.D."/>
            <person name="Dunn M."/>
            <person name="Ellington A.G."/>
            <person name="Frankland J.A."/>
            <person name="Fraser A."/>
            <person name="French L."/>
            <person name="Garner P."/>
            <person name="Grafham D.V."/>
            <person name="Griffiths C."/>
            <person name="Griffiths M.N.D."/>
            <person name="Gwilliam R."/>
            <person name="Hall R.E."/>
            <person name="Hammond S."/>
            <person name="Harley J.L."/>
            <person name="Heath P.D."/>
            <person name="Ho S."/>
            <person name="Holden J.L."/>
            <person name="Howden P.J."/>
            <person name="Huckle E."/>
            <person name="Hunt A.R."/>
            <person name="Hunt S.E."/>
            <person name="Jekosch K."/>
            <person name="Johnson C.M."/>
            <person name="Johnson D."/>
            <person name="Kay M.P."/>
            <person name="Kimberley A.M."/>
            <person name="King A."/>
            <person name="Knights A."/>
            <person name="Laird G.K."/>
            <person name="Lawlor S."/>
            <person name="Lehvaeslaiho M.H."/>
            <person name="Leversha M.A."/>
            <person name="Lloyd C."/>
            <person name="Lloyd D.M."/>
            <person name="Lovell J.D."/>
            <person name="Marsh V.L."/>
            <person name="Martin S.L."/>
            <person name="McConnachie L.J."/>
            <person name="McLay K."/>
            <person name="McMurray A.A."/>
            <person name="Milne S.A."/>
            <person name="Mistry D."/>
            <person name="Moore M.J.F."/>
            <person name="Mullikin J.C."/>
            <person name="Nickerson T."/>
            <person name="Oliver K."/>
            <person name="Parker A."/>
            <person name="Patel R."/>
            <person name="Pearce T.A.V."/>
            <person name="Peck A.I."/>
            <person name="Phillimore B.J.C.T."/>
            <person name="Prathalingam S.R."/>
            <person name="Plumb R.W."/>
            <person name="Ramsay H."/>
            <person name="Rice C.M."/>
            <person name="Ross M.T."/>
            <person name="Scott C.E."/>
            <person name="Sehra H.K."/>
            <person name="Shownkeen R."/>
            <person name="Sims S."/>
            <person name="Skuce C.D."/>
            <person name="Smith M.L."/>
            <person name="Soderlund C."/>
            <person name="Steward C.A."/>
            <person name="Sulston J.E."/>
            <person name="Swann R.M."/>
            <person name="Sycamore N."/>
            <person name="Taylor R."/>
            <person name="Tee L."/>
            <person name="Thomas D.W."/>
            <person name="Thorpe A."/>
            <person name="Tracey A."/>
            <person name="Tromans A.C."/>
            <person name="Vaudin M."/>
            <person name="Wall M."/>
            <person name="Wallis J.M."/>
            <person name="Whitehead S.L."/>
            <person name="Whittaker P."/>
            <person name="Willey D.L."/>
            <person name="Williams L."/>
            <person name="Williams S.A."/>
            <person name="Wilming L."/>
            <person name="Wray P.W."/>
            <person name="Hubbard T."/>
            <person name="Durbin R.M."/>
            <person name="Bentley D.R."/>
            <person name="Beck S."/>
            <person name="Rogers J."/>
        </authorList>
    </citation>
    <scope>NUCLEOTIDE SEQUENCE [LARGE SCALE GENOMIC DNA]</scope>
</reference>
<reference key="3">
    <citation type="submission" date="2005-09" db="EMBL/GenBank/DDBJ databases">
        <authorList>
            <person name="Mural R.J."/>
            <person name="Istrail S."/>
            <person name="Sutton G.G."/>
            <person name="Florea L."/>
            <person name="Halpern A.L."/>
            <person name="Mobarry C.M."/>
            <person name="Lippert R."/>
            <person name="Walenz B."/>
            <person name="Shatkay H."/>
            <person name="Dew I."/>
            <person name="Miller J.R."/>
            <person name="Flanigan M.J."/>
            <person name="Edwards N.J."/>
            <person name="Bolanos R."/>
            <person name="Fasulo D."/>
            <person name="Halldorsson B.V."/>
            <person name="Hannenhalli S."/>
            <person name="Turner R."/>
            <person name="Yooseph S."/>
            <person name="Lu F."/>
            <person name="Nusskern D.R."/>
            <person name="Shue B.C."/>
            <person name="Zheng X.H."/>
            <person name="Zhong F."/>
            <person name="Delcher A.L."/>
            <person name="Huson D.H."/>
            <person name="Kravitz S.A."/>
            <person name="Mouchard L."/>
            <person name="Reinert K."/>
            <person name="Remington K.A."/>
            <person name="Clark A.G."/>
            <person name="Waterman M.S."/>
            <person name="Eichler E.E."/>
            <person name="Adams M.D."/>
            <person name="Hunkapiller M.W."/>
            <person name="Myers E.W."/>
            <person name="Venter J.C."/>
        </authorList>
    </citation>
    <scope>NUCLEOTIDE SEQUENCE [LARGE SCALE GENOMIC DNA]</scope>
</reference>
<reference key="4">
    <citation type="journal article" date="2004" name="Genome Res.">
        <title>The status, quality, and expansion of the NIH full-length cDNA project: the Mammalian Gene Collection (MGC).</title>
        <authorList>
            <consortium name="The MGC Project Team"/>
        </authorList>
    </citation>
    <scope>NUCLEOTIDE SEQUENCE [LARGE SCALE MRNA] (ISOFORM 4)</scope>
</reference>
<reference key="5">
    <citation type="submission" date="1999-07" db="EMBL/GenBank/DDBJ databases">
        <title>Identification and characterization of a novel human cadherin with similarity to N-cadherin.</title>
        <authorList>
            <person name="Kools P.F.J."/>
            <person name="van Roy F."/>
        </authorList>
    </citation>
    <scope>NUCLEOTIDE SEQUENCE [MRNA] OF 410-832 (ISOFORM 1)</scope>
</reference>
<reference key="6">
    <citation type="journal article" date="2017" name="Mucosal Immunol.">
        <title>Cadherin 26 is an alpha integrin-binding epithelial receptor regulated during allergic inflammation.</title>
        <authorList>
            <person name="Caldwell J.M."/>
            <person name="Collins M.H."/>
            <person name="Kemme K.A."/>
            <person name="Sherrill J.D."/>
            <person name="Wen T."/>
            <person name="Rochman M."/>
            <person name="Stucke E.M."/>
            <person name="Amin L."/>
            <person name="Tai H."/>
            <person name="Putnam P.E."/>
            <person name="Jimenez-Dalmaroni M.J."/>
            <person name="Wormald M.R."/>
            <person name="Porollo A."/>
            <person name="Abonia J.P."/>
            <person name="Rothenberg M.E."/>
        </authorList>
    </citation>
    <scope>FUNCTION</scope>
    <scope>TISSUE SPECIFICITY</scope>
    <scope>SUBCELLULAR LOCATION</scope>
    <scope>GLYCOSYLATION</scope>
    <scope>SUBUNIT</scope>
    <scope>IDENTIFICATION IN A CADHERIN/CATENIN ADHESION COMPLEX</scope>
</reference>
<protein>
    <recommendedName>
        <fullName>Cadherin-like protein 26</fullName>
    </recommendedName>
    <alternativeName>
        <fullName>Cadherin-like protein VR20</fullName>
    </alternativeName>
</protein>
<sequence>MAMRSGRHPSLLLLLVLLLWLLQVSIIDSVQQETDDLTKQTKEKIYQPLRRSKRRWVITTLELEEEDPGPFPKLIGELFNNMSYNMSLMYLISGPGVDEYPEIGLFSLEDHENGRIYVHRPVDREMTPSFTVYFDVVERSTGKIVDTSLIFNIRISDVNDHAPQFPEKEFNITVQENQSAGQPIFQMLAVDLDEENTPNSQVLYFLISQTPLLKESGFRVDRLSGEIRLSGCLDYETAPQFTLLIRARDCGEPSLSSTTTVHVDVQEGNNHRPAFTQENYKVQIPEGRASQGVLRLLVQDRDSPFTSAWRAKFNILHGNEEGHFDISTDPETNEGILNVIKPLDYETRPAQSLIIVVENEERLVFCERGKLQPPRKAAASATVSVQVTDANDPPAFHPQSFIVNKEEGARPGTLLGTFNAMDPDSQIRYELVHDPANWVSVDKNSGVVITVEPIDRESPHVNNSFYVIIIHAVDDGFPPQTATGTLMLFLSDINDNVPTLRPRSRYMEVCESAVHEPLHIEAEDPDLEPFSDPFTFELDNTWGNAEDTWKLGRNWGQSVELLTLRSLPRGNYLVPLFIGDKQGLSQKQTVHVRICPCASGLTCVELADAEVGLHVGALFPVCAAFVALAVALLFLLRCYFVLEPKRHGCSVSNDEGHQTLVMYNAESKGTSAQTWSDVEGQRPALLICTAAAGPTQGVKDLEEVPPSAASQSAQARCALGSWGYGKPFEPRSVKNIHSTPAYPDATMHRQLLAPVEGRMAETLNQKLHVANVLEDDPGYLPHVYSEEGECGGAPSLSSLASLEQELQPDLLDSLGSKATPFEEIYSESGVPS</sequence>